<evidence type="ECO:0000255" key="1">
    <source>
        <dbReference type="HAMAP-Rule" id="MF_00147"/>
    </source>
</evidence>
<proteinExistence type="inferred from homology"/>
<keyword id="KW-0963">Cytoplasm</keyword>
<keyword id="KW-0312">Gluconeogenesis</keyword>
<keyword id="KW-0324">Glycolysis</keyword>
<keyword id="KW-0413">Isomerase</keyword>
<name>TPIS_STAHJ</name>
<protein>
    <recommendedName>
        <fullName evidence="1">Triosephosphate isomerase</fullName>
        <shortName evidence="1">TIM</shortName>
        <shortName evidence="1">TPI</shortName>
        <ecNumber evidence="1">5.3.1.1</ecNumber>
    </recommendedName>
    <alternativeName>
        <fullName evidence="1">Triose-phosphate isomerase</fullName>
    </alternativeName>
</protein>
<sequence length="253" mass="27415">MRKPIIAGNWKMNKTVKEAKDFVNNLPTLPDEKEVESVICAPTIQLDALISLVNDGKAKGLKIGAQNTYFEDNGAFTGETSPVALADLGVKYVVIGHSERRELFHETDEDVNKKAHAVFNHGMTPIICVGETDEERENGKANEIVSNQVEKALEGLSEEQLKEVVIAYEPIWAIGTGKSATSDDANEMCAHVRKTVAKVASQDVADATRIQYGGSVKPNNVKEYMAQSDIDGALVGGASLKVEDFVQLLEGAK</sequence>
<organism>
    <name type="scientific">Staphylococcus haemolyticus (strain JCSC1435)</name>
    <dbReference type="NCBI Taxonomy" id="279808"/>
    <lineage>
        <taxon>Bacteria</taxon>
        <taxon>Bacillati</taxon>
        <taxon>Bacillota</taxon>
        <taxon>Bacilli</taxon>
        <taxon>Bacillales</taxon>
        <taxon>Staphylococcaceae</taxon>
        <taxon>Staphylococcus</taxon>
    </lineage>
</organism>
<comment type="function">
    <text evidence="1">Involved in the gluconeogenesis. Catalyzes stereospecifically the conversion of dihydroxyacetone phosphate (DHAP) to D-glyceraldehyde-3-phosphate (G3P).</text>
</comment>
<comment type="catalytic activity">
    <reaction evidence="1">
        <text>D-glyceraldehyde 3-phosphate = dihydroxyacetone phosphate</text>
        <dbReference type="Rhea" id="RHEA:18585"/>
        <dbReference type="ChEBI" id="CHEBI:57642"/>
        <dbReference type="ChEBI" id="CHEBI:59776"/>
        <dbReference type="EC" id="5.3.1.1"/>
    </reaction>
</comment>
<comment type="pathway">
    <text evidence="1">Carbohydrate biosynthesis; gluconeogenesis.</text>
</comment>
<comment type="pathway">
    <text evidence="1">Carbohydrate degradation; glycolysis; D-glyceraldehyde 3-phosphate from glycerone phosphate: step 1/1.</text>
</comment>
<comment type="subunit">
    <text evidence="1">Homodimer.</text>
</comment>
<comment type="subcellular location">
    <subcellularLocation>
        <location evidence="1">Cytoplasm</location>
    </subcellularLocation>
</comment>
<comment type="similarity">
    <text evidence="1">Belongs to the triosephosphate isomerase family.</text>
</comment>
<gene>
    <name evidence="1" type="primary">tpiA</name>
    <name type="ordered locus">SH2111</name>
</gene>
<reference key="1">
    <citation type="journal article" date="2005" name="J. Bacteriol.">
        <title>Whole-genome sequencing of Staphylococcus haemolyticus uncovers the extreme plasticity of its genome and the evolution of human-colonizing staphylococcal species.</title>
        <authorList>
            <person name="Takeuchi F."/>
            <person name="Watanabe S."/>
            <person name="Baba T."/>
            <person name="Yuzawa H."/>
            <person name="Ito T."/>
            <person name="Morimoto Y."/>
            <person name="Kuroda M."/>
            <person name="Cui L."/>
            <person name="Takahashi M."/>
            <person name="Ankai A."/>
            <person name="Baba S."/>
            <person name="Fukui S."/>
            <person name="Lee J.C."/>
            <person name="Hiramatsu K."/>
        </authorList>
    </citation>
    <scope>NUCLEOTIDE SEQUENCE [LARGE SCALE GENOMIC DNA]</scope>
    <source>
        <strain>JCSC1435</strain>
    </source>
</reference>
<dbReference type="EC" id="5.3.1.1" evidence="1"/>
<dbReference type="EMBL" id="AP006716">
    <property type="protein sequence ID" value="BAE05420.1"/>
    <property type="molecule type" value="Genomic_DNA"/>
</dbReference>
<dbReference type="RefSeq" id="WP_011276375.1">
    <property type="nucleotide sequence ID" value="NC_007168.1"/>
</dbReference>
<dbReference type="SMR" id="Q4L4K5"/>
<dbReference type="GeneID" id="93781435"/>
<dbReference type="KEGG" id="sha:SH2111"/>
<dbReference type="eggNOG" id="COG0149">
    <property type="taxonomic scope" value="Bacteria"/>
</dbReference>
<dbReference type="HOGENOM" id="CLU_024251_2_3_9"/>
<dbReference type="OrthoDB" id="9809429at2"/>
<dbReference type="UniPathway" id="UPA00109">
    <property type="reaction ID" value="UER00189"/>
</dbReference>
<dbReference type="UniPathway" id="UPA00138"/>
<dbReference type="Proteomes" id="UP000000543">
    <property type="component" value="Chromosome"/>
</dbReference>
<dbReference type="GO" id="GO:0005829">
    <property type="term" value="C:cytosol"/>
    <property type="evidence" value="ECO:0007669"/>
    <property type="project" value="TreeGrafter"/>
</dbReference>
<dbReference type="GO" id="GO:0004807">
    <property type="term" value="F:triose-phosphate isomerase activity"/>
    <property type="evidence" value="ECO:0007669"/>
    <property type="project" value="UniProtKB-UniRule"/>
</dbReference>
<dbReference type="GO" id="GO:0006094">
    <property type="term" value="P:gluconeogenesis"/>
    <property type="evidence" value="ECO:0007669"/>
    <property type="project" value="UniProtKB-UniRule"/>
</dbReference>
<dbReference type="GO" id="GO:0046166">
    <property type="term" value="P:glyceraldehyde-3-phosphate biosynthetic process"/>
    <property type="evidence" value="ECO:0007669"/>
    <property type="project" value="TreeGrafter"/>
</dbReference>
<dbReference type="GO" id="GO:0019563">
    <property type="term" value="P:glycerol catabolic process"/>
    <property type="evidence" value="ECO:0007669"/>
    <property type="project" value="TreeGrafter"/>
</dbReference>
<dbReference type="GO" id="GO:0006096">
    <property type="term" value="P:glycolytic process"/>
    <property type="evidence" value="ECO:0007669"/>
    <property type="project" value="UniProtKB-UniRule"/>
</dbReference>
<dbReference type="CDD" id="cd00311">
    <property type="entry name" value="TIM"/>
    <property type="match status" value="1"/>
</dbReference>
<dbReference type="FunFam" id="3.20.20.70:FF:000016">
    <property type="entry name" value="Triosephosphate isomerase"/>
    <property type="match status" value="1"/>
</dbReference>
<dbReference type="Gene3D" id="3.20.20.70">
    <property type="entry name" value="Aldolase class I"/>
    <property type="match status" value="1"/>
</dbReference>
<dbReference type="HAMAP" id="MF_00147_B">
    <property type="entry name" value="TIM_B"/>
    <property type="match status" value="1"/>
</dbReference>
<dbReference type="InterPro" id="IPR013785">
    <property type="entry name" value="Aldolase_TIM"/>
</dbReference>
<dbReference type="InterPro" id="IPR035990">
    <property type="entry name" value="TIM_sf"/>
</dbReference>
<dbReference type="InterPro" id="IPR022896">
    <property type="entry name" value="TrioseP_Isoase_bac/euk"/>
</dbReference>
<dbReference type="InterPro" id="IPR000652">
    <property type="entry name" value="Triosephosphate_isomerase"/>
</dbReference>
<dbReference type="InterPro" id="IPR020861">
    <property type="entry name" value="Triosephosphate_isomerase_AS"/>
</dbReference>
<dbReference type="NCBIfam" id="TIGR00419">
    <property type="entry name" value="tim"/>
    <property type="match status" value="1"/>
</dbReference>
<dbReference type="PANTHER" id="PTHR21139">
    <property type="entry name" value="TRIOSEPHOSPHATE ISOMERASE"/>
    <property type="match status" value="1"/>
</dbReference>
<dbReference type="PANTHER" id="PTHR21139:SF42">
    <property type="entry name" value="TRIOSEPHOSPHATE ISOMERASE"/>
    <property type="match status" value="1"/>
</dbReference>
<dbReference type="Pfam" id="PF00121">
    <property type="entry name" value="TIM"/>
    <property type="match status" value="1"/>
</dbReference>
<dbReference type="SUPFAM" id="SSF51351">
    <property type="entry name" value="Triosephosphate isomerase (TIM)"/>
    <property type="match status" value="1"/>
</dbReference>
<dbReference type="PROSITE" id="PS00171">
    <property type="entry name" value="TIM_1"/>
    <property type="match status" value="1"/>
</dbReference>
<dbReference type="PROSITE" id="PS51440">
    <property type="entry name" value="TIM_2"/>
    <property type="match status" value="1"/>
</dbReference>
<feature type="chain" id="PRO_0000307569" description="Triosephosphate isomerase">
    <location>
        <begin position="1"/>
        <end position="253"/>
    </location>
</feature>
<feature type="active site" description="Electrophile" evidence="1">
    <location>
        <position position="97"/>
    </location>
</feature>
<feature type="active site" description="Proton acceptor" evidence="1">
    <location>
        <position position="169"/>
    </location>
</feature>
<feature type="binding site" evidence="1">
    <location>
        <begin position="9"/>
        <end position="11"/>
    </location>
    <ligand>
        <name>substrate</name>
    </ligand>
</feature>
<feature type="binding site" evidence="1">
    <location>
        <position position="175"/>
    </location>
    <ligand>
        <name>substrate</name>
    </ligand>
</feature>
<feature type="binding site" evidence="1">
    <location>
        <position position="215"/>
    </location>
    <ligand>
        <name>substrate</name>
    </ligand>
</feature>
<feature type="binding site" evidence="1">
    <location>
        <begin position="236"/>
        <end position="237"/>
    </location>
    <ligand>
        <name>substrate</name>
    </ligand>
</feature>
<accession>Q4L4K5</accession>